<comment type="function">
    <text evidence="1">The glycine cleavage system catalyzes the degradation of glycine. The H protein shuttles the methylamine group of glycine from the P protein to the T protein.</text>
</comment>
<comment type="cofactor">
    <cofactor evidence="1">
        <name>(R)-lipoate</name>
        <dbReference type="ChEBI" id="CHEBI:83088"/>
    </cofactor>
    <text evidence="1">Binds 1 lipoyl cofactor covalently.</text>
</comment>
<comment type="subunit">
    <text evidence="1">The glycine cleavage system is composed of four proteins: P, T, L and H.</text>
</comment>
<comment type="similarity">
    <text evidence="1">Belongs to the GcvH family.</text>
</comment>
<protein>
    <recommendedName>
        <fullName evidence="1">Glycine cleavage system H protein</fullName>
    </recommendedName>
</protein>
<sequence>MELEFPEDLRYLDSHEYIRLDGEIATIGISAYAIEQLGDLVFLELPEVGDSLERGSSFGSIESVKAAEDLYPPVSGTVIDRNEAMIETPEVIADDPYGDGWLLKVRVENPDDELEDTLSAHDYRAMLEGEEGI</sequence>
<organism>
    <name type="scientific">Crocosphaera subtropica (strain ATCC 51142 / BH68)</name>
    <name type="common">Cyanothece sp. (strain ATCC 51142)</name>
    <dbReference type="NCBI Taxonomy" id="43989"/>
    <lineage>
        <taxon>Bacteria</taxon>
        <taxon>Bacillati</taxon>
        <taxon>Cyanobacteriota</taxon>
        <taxon>Cyanophyceae</taxon>
        <taxon>Oscillatoriophycideae</taxon>
        <taxon>Chroococcales</taxon>
        <taxon>Aphanothecaceae</taxon>
        <taxon>Crocosphaera</taxon>
        <taxon>Crocosphaera subtropica</taxon>
    </lineage>
</organism>
<dbReference type="EMBL" id="CP000806">
    <property type="protein sequence ID" value="ACB51991.1"/>
    <property type="molecule type" value="Genomic_DNA"/>
</dbReference>
<dbReference type="RefSeq" id="WP_009544668.1">
    <property type="nucleotide sequence ID" value="NC_010546.1"/>
</dbReference>
<dbReference type="SMR" id="B1WT69"/>
<dbReference type="STRING" id="43989.cce_2643"/>
<dbReference type="KEGG" id="cyt:cce_2643"/>
<dbReference type="eggNOG" id="COG0509">
    <property type="taxonomic scope" value="Bacteria"/>
</dbReference>
<dbReference type="HOGENOM" id="CLU_097408_2_2_3"/>
<dbReference type="OrthoDB" id="9796712at2"/>
<dbReference type="Proteomes" id="UP000001203">
    <property type="component" value="Chromosome circular"/>
</dbReference>
<dbReference type="GO" id="GO:0005829">
    <property type="term" value="C:cytosol"/>
    <property type="evidence" value="ECO:0007669"/>
    <property type="project" value="TreeGrafter"/>
</dbReference>
<dbReference type="GO" id="GO:0005960">
    <property type="term" value="C:glycine cleavage complex"/>
    <property type="evidence" value="ECO:0007669"/>
    <property type="project" value="InterPro"/>
</dbReference>
<dbReference type="GO" id="GO:0019464">
    <property type="term" value="P:glycine decarboxylation via glycine cleavage system"/>
    <property type="evidence" value="ECO:0007669"/>
    <property type="project" value="UniProtKB-UniRule"/>
</dbReference>
<dbReference type="CDD" id="cd06848">
    <property type="entry name" value="GCS_H"/>
    <property type="match status" value="1"/>
</dbReference>
<dbReference type="Gene3D" id="2.40.50.100">
    <property type="match status" value="1"/>
</dbReference>
<dbReference type="HAMAP" id="MF_00272">
    <property type="entry name" value="GcvH"/>
    <property type="match status" value="1"/>
</dbReference>
<dbReference type="InterPro" id="IPR003016">
    <property type="entry name" value="2-oxoA_DH_lipoyl-BS"/>
</dbReference>
<dbReference type="InterPro" id="IPR000089">
    <property type="entry name" value="Biotin_lipoyl"/>
</dbReference>
<dbReference type="InterPro" id="IPR002930">
    <property type="entry name" value="GCV_H"/>
</dbReference>
<dbReference type="InterPro" id="IPR033753">
    <property type="entry name" value="GCV_H/Fam206"/>
</dbReference>
<dbReference type="InterPro" id="IPR017453">
    <property type="entry name" value="GCV_H_sub"/>
</dbReference>
<dbReference type="InterPro" id="IPR011053">
    <property type="entry name" value="Single_hybrid_motif"/>
</dbReference>
<dbReference type="NCBIfam" id="TIGR00527">
    <property type="entry name" value="gcvH"/>
    <property type="match status" value="1"/>
</dbReference>
<dbReference type="NCBIfam" id="NF002270">
    <property type="entry name" value="PRK01202.1"/>
    <property type="match status" value="1"/>
</dbReference>
<dbReference type="PANTHER" id="PTHR11715">
    <property type="entry name" value="GLYCINE CLEAVAGE SYSTEM H PROTEIN"/>
    <property type="match status" value="1"/>
</dbReference>
<dbReference type="PANTHER" id="PTHR11715:SF3">
    <property type="entry name" value="GLYCINE CLEAVAGE SYSTEM H PROTEIN-RELATED"/>
    <property type="match status" value="1"/>
</dbReference>
<dbReference type="Pfam" id="PF01597">
    <property type="entry name" value="GCV_H"/>
    <property type="match status" value="1"/>
</dbReference>
<dbReference type="SUPFAM" id="SSF51230">
    <property type="entry name" value="Single hybrid motif"/>
    <property type="match status" value="1"/>
</dbReference>
<dbReference type="PROSITE" id="PS50968">
    <property type="entry name" value="BIOTINYL_LIPOYL"/>
    <property type="match status" value="1"/>
</dbReference>
<dbReference type="PROSITE" id="PS00189">
    <property type="entry name" value="LIPOYL"/>
    <property type="match status" value="1"/>
</dbReference>
<reference key="1">
    <citation type="journal article" date="2008" name="Proc. Natl. Acad. Sci. U.S.A.">
        <title>The genome of Cyanothece 51142, a unicellular diazotrophic cyanobacterium important in the marine nitrogen cycle.</title>
        <authorList>
            <person name="Welsh E.A."/>
            <person name="Liberton M."/>
            <person name="Stoeckel J."/>
            <person name="Loh T."/>
            <person name="Elvitigala T."/>
            <person name="Wang C."/>
            <person name="Wollam A."/>
            <person name="Fulton R.S."/>
            <person name="Clifton S.W."/>
            <person name="Jacobs J.M."/>
            <person name="Aurora R."/>
            <person name="Ghosh B.K."/>
            <person name="Sherman L.A."/>
            <person name="Smith R.D."/>
            <person name="Wilson R.K."/>
            <person name="Pakrasi H.B."/>
        </authorList>
    </citation>
    <scope>NUCLEOTIDE SEQUENCE [LARGE SCALE GENOMIC DNA]</scope>
    <source>
        <strain>ATCC 51142 / BH68</strain>
    </source>
</reference>
<feature type="chain" id="PRO_1000114516" description="Glycine cleavage system H protein">
    <location>
        <begin position="1"/>
        <end position="133"/>
    </location>
</feature>
<feature type="domain" description="Lipoyl-binding" evidence="2">
    <location>
        <begin position="24"/>
        <end position="106"/>
    </location>
</feature>
<feature type="modified residue" description="N6-lipoyllysine" evidence="1">
    <location>
        <position position="65"/>
    </location>
</feature>
<evidence type="ECO:0000255" key="1">
    <source>
        <dbReference type="HAMAP-Rule" id="MF_00272"/>
    </source>
</evidence>
<evidence type="ECO:0000255" key="2">
    <source>
        <dbReference type="PROSITE-ProRule" id="PRU01066"/>
    </source>
</evidence>
<keyword id="KW-0450">Lipoyl</keyword>
<keyword id="KW-1185">Reference proteome</keyword>
<name>GCSH_CROS5</name>
<gene>
    <name evidence="1" type="primary">gcvH</name>
    <name type="ordered locus">cce_2643</name>
</gene>
<proteinExistence type="inferred from homology"/>
<accession>B1WT69</accession>